<feature type="chain" id="PRO_0000402407" description="Probable RNA-directed RNA polymerase">
    <location>
        <begin position="1"/>
        <end position="1505"/>
    </location>
</feature>
<proteinExistence type="inferred from homology"/>
<reference key="1">
    <citation type="journal article" date="1989" name="J. Biol. Chem.">
        <title>The double-stranded RNA genome of yeast virus L-A encodes its own putative RNA polymerase by fusing two open reading frames.</title>
        <authorList>
            <person name="Icho T."/>
            <person name="Wickner R.B."/>
        </authorList>
    </citation>
    <scope>NUCLEOTIDE SEQUENCE [GENOMIC RNA]</scope>
</reference>
<accession>Q87022</accession>
<accession>Q87023</accession>
<evidence type="ECO:0000305" key="1"/>
<gene>
    <name type="primary">gag-pol</name>
</gene>
<comment type="function">
    <text>RNA-dependent RNA polymerase which replicates the viral genome. Catalyzes the transcription of fully conservative plus-strand genomic RNAs that are extruded from the virion into the cytoplasm where they function as mRNAs for translation of viral proteins and also as substrates for encapsidation to form new virions. Once encapsidated, the positive strand is converted to dsRNA by the RNA-directed RNA polymerase. Displays ssRNA-binding activity.</text>
</comment>
<comment type="catalytic activity">
    <reaction>
        <text>RNA(n) + a ribonucleoside 5'-triphosphate = RNA(n+1) + diphosphate</text>
        <dbReference type="Rhea" id="RHEA:21248"/>
        <dbReference type="Rhea" id="RHEA-COMP:14527"/>
        <dbReference type="Rhea" id="RHEA-COMP:17342"/>
        <dbReference type="ChEBI" id="CHEBI:33019"/>
        <dbReference type="ChEBI" id="CHEBI:61557"/>
        <dbReference type="ChEBI" id="CHEBI:140395"/>
        <dbReference type="EC" id="2.7.7.48"/>
    </reaction>
</comment>
<comment type="alternative products">
    <event type="ribosomal frameshifting"/>
    <isoform>
        <id>Q87022-1</id>
        <name>RNA-directed RNA polymerase</name>
        <name>Pol protein</name>
        <sequence type="displayed"/>
    </isoform>
    <isoform>
        <id>P32503-1</id>
        <name>Major capsid protein</name>
        <name>Gag protein</name>
        <sequence type="external"/>
    </isoform>
</comment>
<comment type="miscellaneous">
    <text>One molecule or two of Gag capsid protein is replaced in the virion by Gag-Pol because the fusion protein is essential for RNA encapsidation and replication.</text>
</comment>
<comment type="miscellaneous">
    <molecule>Isoform RNA-directed RNA polymerase</molecule>
    <text>Produced by -1 ribosomal frameshifting.</text>
</comment>
<comment type="similarity">
    <text evidence="1">Belongs to the totiviridae RNA-directed RNA polymerase family.</text>
</comment>
<comment type="sequence caution" evidence="1">
    <conflict type="erroneous gene model prediction">
        <sequence resource="EMBL-CDS" id="AAA50507"/>
    </conflict>
</comment>
<comment type="sequence caution" evidence="1">
    <conflict type="erroneous gene model prediction">
        <sequence resource="EMBL-CDS" id="AAA50508"/>
    </conflict>
</comment>
<dbReference type="EC" id="2.7.7.48"/>
<dbReference type="EMBL" id="J04692">
    <property type="protein sequence ID" value="AAA50507.1"/>
    <property type="status" value="ALT_SEQ"/>
    <property type="molecule type" value="Genomic_RNA"/>
</dbReference>
<dbReference type="EMBL" id="J04692">
    <property type="protein sequence ID" value="AAA50508.1"/>
    <property type="status" value="ALT_SEQ"/>
    <property type="molecule type" value="Genomic_RNA"/>
</dbReference>
<dbReference type="RefSeq" id="NP_620493.1">
    <property type="nucleotide sequence ID" value="NC_003745.1"/>
</dbReference>
<dbReference type="RefSeq" id="NP_620495.1">
    <property type="nucleotide sequence ID" value="NC_003745.1"/>
</dbReference>
<dbReference type="SMR" id="Q87022"/>
<dbReference type="KEGG" id="vg:940476"/>
<dbReference type="KEGG" id="vg:940478"/>
<dbReference type="OrthoDB" id="9167at10239"/>
<dbReference type="Proteomes" id="UP000000351">
    <property type="component" value="Segment"/>
</dbReference>
<dbReference type="GO" id="GO:0016787">
    <property type="term" value="F:hydrolase activity"/>
    <property type="evidence" value="ECO:0007669"/>
    <property type="project" value="UniProtKB-KW"/>
</dbReference>
<dbReference type="GO" id="GO:0000166">
    <property type="term" value="F:nucleotide binding"/>
    <property type="evidence" value="ECO:0007669"/>
    <property type="project" value="UniProtKB-KW"/>
</dbReference>
<dbReference type="GO" id="GO:0003723">
    <property type="term" value="F:RNA binding"/>
    <property type="evidence" value="ECO:0007669"/>
    <property type="project" value="UniProtKB-KW"/>
</dbReference>
<dbReference type="GO" id="GO:0003968">
    <property type="term" value="F:RNA-directed RNA polymerase activity"/>
    <property type="evidence" value="ECO:0007669"/>
    <property type="project" value="UniProtKB-KW"/>
</dbReference>
<dbReference type="GO" id="GO:0006351">
    <property type="term" value="P:DNA-templated transcription"/>
    <property type="evidence" value="ECO:0007669"/>
    <property type="project" value="InterPro"/>
</dbReference>
<dbReference type="GO" id="GO:0075523">
    <property type="term" value="P:viral translational frameshifting"/>
    <property type="evidence" value="ECO:0007669"/>
    <property type="project" value="UniProtKB-KW"/>
</dbReference>
<dbReference type="Gene3D" id="3.90.1840.10">
    <property type="entry name" value="Major capsid protein"/>
    <property type="match status" value="1"/>
</dbReference>
<dbReference type="InterPro" id="IPR043502">
    <property type="entry name" value="DNA/RNA_pol_sf"/>
</dbReference>
<dbReference type="InterPro" id="IPR015302">
    <property type="entry name" value="Major_coat_LA-virus"/>
</dbReference>
<dbReference type="InterPro" id="IPR036332">
    <property type="entry name" value="Major_coat_LA-virus_sf"/>
</dbReference>
<dbReference type="InterPro" id="IPR001795">
    <property type="entry name" value="RNA-dir_pol_luteovirus"/>
</dbReference>
<dbReference type="Pfam" id="PF09220">
    <property type="entry name" value="LA-virus_coat"/>
    <property type="match status" value="1"/>
</dbReference>
<dbReference type="Pfam" id="PF02123">
    <property type="entry name" value="RdRP_4"/>
    <property type="match status" value="1"/>
</dbReference>
<dbReference type="SUPFAM" id="SSF56672">
    <property type="entry name" value="DNA/RNA polymerases"/>
    <property type="match status" value="1"/>
</dbReference>
<dbReference type="SUPFAM" id="SSF82856">
    <property type="entry name" value="L-A virus major coat protein"/>
    <property type="match status" value="1"/>
</dbReference>
<sequence length="1505" mass="170480">MLRFVTKNSQDKSSDLFSICSDRGTFVAHNRVRTDFKFDNLVFNRVYGVSQKFTLVGNPTVCFNEGSSYLEGIAKKYLTLDGGLAIDNVLNELRSTCGIPGNAVASHAYNITSWRWYDNHVALLMNMLRAYHLQVLTEQGQYSAGDIPMYHDGHVKIKLPVTIDDTAGPTQFAWPSDRSTDSYPDWAQFSESFPSIDVPYLDVRPLTVTEVNFVLMMMSKWHRRTNLAIDYEAPQLADKFAYRHALTVQDADEWIEGDRTDDQFRPPSSKVMLSALRKYVNHNRLYNQFYTAAQLLAQIMMKPVPNCAEGYAWLMHDALVNIPKFGSIRGRYPFLLSGDAALIQATALEDWSAIMAKPELVFTYAMQVSVALNTGLYLRRVKKTGFGTTIDDSYEDGAFLQPETFVQAALACCTGQDAPLNGMSDVYVTYPDLLEFDAVTQVPITVIEPAGYNIVDDHLVVVGVPVACSPYMIFPVAAFDTANPYCGNFVIKAANKYLRKGAVYDKLEAWKLAWALRVAGYDTHFKVYGDTHGLTKFYADNGDTWTHIPEFVTDGDVMEVFVTAIERRARHFVELPRLNSPAFFRSVEVSTTIYDTHVQAGAHAVYHASRINLDYVKPVSTGIQVINAGELKNYWGSVRRTQQGLRSGRSYDASCNAYRRTYSWRCPRRVDRTGGQCFSRVNVIEPSHGPRPTRYILQEPGTYPAWIRFRNRVQAVSRQKATHFLFDIVPAAVISDFTTSDTSSFAYKSHTYAVNVTALRFSDTYALYVQTDTNMTILSPAARRQASATYSQVAGFCYNTPTVMDSLANILDVDRNIRPKHFKGLRLYTRSKVTAQHHTHLRPDELVEAAAKVSPRRKYYLMCVVELLANLQVDLEAAVATILAYVLTLSEKFVPIFLDSRAIWVGEPGPDALTARLKASSGQIKSIHTADYEPLTELFELAVLMNRGVGHVSWQAEKDHRLNPDVAVVDQARLYSCVRDMFEGSKQTYKYPFMTWDDYTANRWEWVPGGSVHSQYEEDNDYIYPGQYTRNKFITVNKMPKHKISRMIASPPEVRAWTSTKYEWGKQRAIYGTDLRSTLITNFAMFRCEDVLTHKFPVGDQAEAAKVHKRVNMMLDGASSFCFDYDDFNSQHSIASMYTVLCAFRDTFSRNMSDEQAEAMNWVCESVRHMWVLDPDTKEWYRLQGTLLSGWRLTTFMNTVLNWAYMKLAGVFDLDDVQDSVHNGDDVMISLNRVSTAVRIMDAMHRINARAQPAKCNLFSISEFLRVEHGMSGGDGLGAQYLSRSCATLVHSRIESNEPLSVVRVMEADQARLRDLANRTRVQSAVTAIKEQLDKRVTKIFGVGDDVVRDIHTAHRVCGGISTDTWAPVETKIITDNEAYEIPYEIDDPSFWPGVNDYAYKVWKNFGERLEFNKIKDAVARGSRSTIALKRKARITSKKNEFANKSEWERTMYKAYKGLAVSYYANLSKFMSIPPMANIEFGQARYAMQAALDSSDPLRALQVIL</sequence>
<keyword id="KW-0378">Hydrolase</keyword>
<keyword id="KW-0547">Nucleotide-binding</keyword>
<keyword id="KW-0548">Nucleotidyltransferase</keyword>
<keyword id="KW-1185">Reference proteome</keyword>
<keyword id="KW-0688">Ribosomal frameshifting</keyword>
<keyword id="KW-0694">RNA-binding</keyword>
<keyword id="KW-0696">RNA-directed RNA polymerase</keyword>
<keyword id="KW-0808">Transferase</keyword>
<keyword id="KW-0693">Viral RNA replication</keyword>
<organism>
    <name type="scientific">Saccharomyces cerevisiae virus L-A</name>
    <name type="common">ScV-L-A</name>
    <name type="synonym">ScVL1</name>
    <dbReference type="NCBI Taxonomy" id="11008"/>
    <lineage>
        <taxon>Viruses</taxon>
        <taxon>Riboviria</taxon>
        <taxon>Orthornavirae</taxon>
        <taxon>Duplornaviricota</taxon>
        <taxon>Chrymotiviricetes</taxon>
        <taxon>Ghabrivirales</taxon>
        <taxon>Totiviridae</taxon>
        <taxon>Totivirus</taxon>
    </lineage>
</organism>
<protein>
    <recommendedName>
        <fullName>Probable RNA-directed RNA polymerase</fullName>
        <ecNumber>2.7.7.48</ecNumber>
    </recommendedName>
    <alternativeName>
        <fullName>Gag-Pol protein</fullName>
    </alternativeName>
</protein>
<organismHost>
    <name type="scientific">Saccharomyces cerevisiae</name>
    <name type="common">Baker's yeast</name>
    <dbReference type="NCBI Taxonomy" id="4932"/>
</organismHost>
<name>RDRP_SCVLA</name>